<proteinExistence type="inferred from homology"/>
<feature type="chain" id="PRO_0000109163" description="UDP-N-acetylglucosamine--N-acetylmuramyl-(pentapeptide) pyrophosphoryl-undecaprenol N-acetylglucosamine transferase">
    <location>
        <begin position="1"/>
        <end position="352"/>
    </location>
</feature>
<feature type="binding site" evidence="1">
    <location>
        <begin position="14"/>
        <end position="16"/>
    </location>
    <ligand>
        <name>UDP-N-acetyl-alpha-D-glucosamine</name>
        <dbReference type="ChEBI" id="CHEBI:57705"/>
    </ligand>
</feature>
<feature type="binding site" evidence="1">
    <location>
        <position position="124"/>
    </location>
    <ligand>
        <name>UDP-N-acetyl-alpha-D-glucosamine</name>
        <dbReference type="ChEBI" id="CHEBI:57705"/>
    </ligand>
</feature>
<feature type="binding site" evidence="1">
    <location>
        <position position="164"/>
    </location>
    <ligand>
        <name>UDP-N-acetyl-alpha-D-glucosamine</name>
        <dbReference type="ChEBI" id="CHEBI:57705"/>
    </ligand>
</feature>
<feature type="binding site" evidence="1">
    <location>
        <position position="185"/>
    </location>
    <ligand>
        <name>UDP-N-acetyl-alpha-D-glucosamine</name>
        <dbReference type="ChEBI" id="CHEBI:57705"/>
    </ligand>
</feature>
<feature type="binding site" evidence="1">
    <location>
        <position position="285"/>
    </location>
    <ligand>
        <name>UDP-N-acetyl-alpha-D-glucosamine</name>
        <dbReference type="ChEBI" id="CHEBI:57705"/>
    </ligand>
</feature>
<reference key="1">
    <citation type="journal article" date="1998" name="Science">
        <title>Genome sequence of an obligate intracellular pathogen of humans: Chlamydia trachomatis.</title>
        <authorList>
            <person name="Stephens R.S."/>
            <person name="Kalman S."/>
            <person name="Lammel C.J."/>
            <person name="Fan J."/>
            <person name="Marathe R."/>
            <person name="Aravind L."/>
            <person name="Mitchell W.P."/>
            <person name="Olinger L."/>
            <person name="Tatusov R.L."/>
            <person name="Zhao Q."/>
            <person name="Koonin E.V."/>
            <person name="Davis R.W."/>
        </authorList>
    </citation>
    <scope>NUCLEOTIDE SEQUENCE [LARGE SCALE GENOMIC DNA]</scope>
    <source>
        <strain>ATCC VR-885 / DSM 19411 / UW-3/Cx</strain>
    </source>
</reference>
<protein>
    <recommendedName>
        <fullName evidence="1">UDP-N-acetylglucosamine--N-acetylmuramyl-(pentapeptide) pyrophosphoryl-undecaprenol N-acetylglucosamine transferase</fullName>
        <ecNumber evidence="1">2.4.1.227</ecNumber>
    </recommendedName>
    <alternativeName>
        <fullName evidence="1">Undecaprenyl-PP-MurNAc-pentapeptide-UDPGlcNAc GlcNAc transferase</fullName>
    </alternativeName>
</protein>
<comment type="function">
    <text evidence="1">Cell wall formation. Catalyzes the transfer of a GlcNAc subunit on undecaprenyl-pyrophosphoryl-MurNAc-pentapeptide (lipid intermediate I) to form undecaprenyl-pyrophosphoryl-MurNAc-(pentapeptide)GlcNAc (lipid intermediate II).</text>
</comment>
<comment type="catalytic activity">
    <reaction evidence="1">
        <text>di-trans,octa-cis-undecaprenyl diphospho-N-acetyl-alpha-D-muramoyl-L-alanyl-D-glutamyl-meso-2,6-diaminopimeloyl-D-alanyl-D-alanine + UDP-N-acetyl-alpha-D-glucosamine = di-trans,octa-cis-undecaprenyl diphospho-[N-acetyl-alpha-D-glucosaminyl-(1-&gt;4)]-N-acetyl-alpha-D-muramoyl-L-alanyl-D-glutamyl-meso-2,6-diaminopimeloyl-D-alanyl-D-alanine + UDP + H(+)</text>
        <dbReference type="Rhea" id="RHEA:31227"/>
        <dbReference type="ChEBI" id="CHEBI:15378"/>
        <dbReference type="ChEBI" id="CHEBI:57705"/>
        <dbReference type="ChEBI" id="CHEBI:58223"/>
        <dbReference type="ChEBI" id="CHEBI:61387"/>
        <dbReference type="ChEBI" id="CHEBI:61388"/>
        <dbReference type="EC" id="2.4.1.227"/>
    </reaction>
</comment>
<comment type="pathway">
    <text evidence="1">Cell wall biogenesis; peptidoglycan biosynthesis.</text>
</comment>
<comment type="subcellular location">
    <subcellularLocation>
        <location evidence="1">Cell inner membrane</location>
        <topology evidence="1">Peripheral membrane protein</topology>
        <orientation evidence="1">Cytoplasmic side</orientation>
    </subcellularLocation>
</comment>
<comment type="similarity">
    <text evidence="1">Belongs to the glycosyltransferase 28 family. MurG subfamily.</text>
</comment>
<evidence type="ECO:0000255" key="1">
    <source>
        <dbReference type="HAMAP-Rule" id="MF_00033"/>
    </source>
</evidence>
<organism>
    <name type="scientific">Chlamydia trachomatis serovar D (strain ATCC VR-885 / DSM 19411 / UW-3/Cx)</name>
    <dbReference type="NCBI Taxonomy" id="272561"/>
    <lineage>
        <taxon>Bacteria</taxon>
        <taxon>Pseudomonadati</taxon>
        <taxon>Chlamydiota</taxon>
        <taxon>Chlamydiia</taxon>
        <taxon>Chlamydiales</taxon>
        <taxon>Chlamydiaceae</taxon>
        <taxon>Chlamydia/Chlamydophila group</taxon>
        <taxon>Chlamydia</taxon>
    </lineage>
</organism>
<dbReference type="EC" id="2.4.1.227" evidence="1"/>
<dbReference type="EMBL" id="AE001273">
    <property type="protein sequence ID" value="AAC68356.1"/>
    <property type="molecule type" value="Genomic_DNA"/>
</dbReference>
<dbReference type="PIR" id="H71474">
    <property type="entry name" value="H71474"/>
</dbReference>
<dbReference type="RefSeq" id="NP_220280.1">
    <property type="nucleotide sequence ID" value="NC_000117.1"/>
</dbReference>
<dbReference type="RefSeq" id="WP_009872141.1">
    <property type="nucleotide sequence ID" value="NC_000117.1"/>
</dbReference>
<dbReference type="SMR" id="O84766"/>
<dbReference type="FunCoup" id="O84766">
    <property type="interactions" value="176"/>
</dbReference>
<dbReference type="STRING" id="272561.CT_761"/>
<dbReference type="CAZy" id="GT28">
    <property type="family name" value="Glycosyltransferase Family 28"/>
</dbReference>
<dbReference type="EnsemblBacteria" id="AAC68356">
    <property type="protein sequence ID" value="AAC68356"/>
    <property type="gene ID" value="CT_761"/>
</dbReference>
<dbReference type="GeneID" id="884557"/>
<dbReference type="KEGG" id="ctr:CT_761"/>
<dbReference type="PATRIC" id="fig|272561.5.peg.836"/>
<dbReference type="HOGENOM" id="CLU_037404_2_1_0"/>
<dbReference type="InParanoid" id="O84766"/>
<dbReference type="OrthoDB" id="9808936at2"/>
<dbReference type="UniPathway" id="UPA00219"/>
<dbReference type="Proteomes" id="UP000000431">
    <property type="component" value="Chromosome"/>
</dbReference>
<dbReference type="GO" id="GO:0005886">
    <property type="term" value="C:plasma membrane"/>
    <property type="evidence" value="ECO:0007669"/>
    <property type="project" value="UniProtKB-SubCell"/>
</dbReference>
<dbReference type="GO" id="GO:0016757">
    <property type="term" value="F:glycosyltransferase activity"/>
    <property type="evidence" value="ECO:0000318"/>
    <property type="project" value="GO_Central"/>
</dbReference>
<dbReference type="GO" id="GO:0051991">
    <property type="term" value="F:UDP-N-acetyl-D-glucosamine:N-acetylmuramoyl-L-alanyl-D-glutamyl-meso-2,6-diaminopimelyl-D-alanyl-D-alanine-diphosphoundecaprenol 4-beta-N-acetylglucosaminlytransferase activity"/>
    <property type="evidence" value="ECO:0007669"/>
    <property type="project" value="RHEA"/>
</dbReference>
<dbReference type="GO" id="GO:0050511">
    <property type="term" value="F:undecaprenyldiphospho-muramoylpentapeptide beta-N-acetylglucosaminyltransferase activity"/>
    <property type="evidence" value="ECO:0007669"/>
    <property type="project" value="UniProtKB-UniRule"/>
</dbReference>
<dbReference type="GO" id="GO:0005975">
    <property type="term" value="P:carbohydrate metabolic process"/>
    <property type="evidence" value="ECO:0007669"/>
    <property type="project" value="InterPro"/>
</dbReference>
<dbReference type="GO" id="GO:0051301">
    <property type="term" value="P:cell division"/>
    <property type="evidence" value="ECO:0007669"/>
    <property type="project" value="UniProtKB-KW"/>
</dbReference>
<dbReference type="GO" id="GO:0071555">
    <property type="term" value="P:cell wall organization"/>
    <property type="evidence" value="ECO:0007669"/>
    <property type="project" value="UniProtKB-KW"/>
</dbReference>
<dbReference type="GO" id="GO:0030259">
    <property type="term" value="P:lipid glycosylation"/>
    <property type="evidence" value="ECO:0007669"/>
    <property type="project" value="UniProtKB-UniRule"/>
</dbReference>
<dbReference type="GO" id="GO:0009252">
    <property type="term" value="P:peptidoglycan biosynthetic process"/>
    <property type="evidence" value="ECO:0007669"/>
    <property type="project" value="UniProtKB-UniRule"/>
</dbReference>
<dbReference type="GO" id="GO:0008360">
    <property type="term" value="P:regulation of cell shape"/>
    <property type="evidence" value="ECO:0007669"/>
    <property type="project" value="UniProtKB-KW"/>
</dbReference>
<dbReference type="CDD" id="cd03785">
    <property type="entry name" value="GT28_MurG"/>
    <property type="match status" value="1"/>
</dbReference>
<dbReference type="Gene3D" id="3.40.50.2000">
    <property type="entry name" value="Glycogen Phosphorylase B"/>
    <property type="match status" value="2"/>
</dbReference>
<dbReference type="HAMAP" id="MF_00033">
    <property type="entry name" value="MurG"/>
    <property type="match status" value="1"/>
</dbReference>
<dbReference type="InterPro" id="IPR006009">
    <property type="entry name" value="GlcNAc_MurG"/>
</dbReference>
<dbReference type="InterPro" id="IPR007235">
    <property type="entry name" value="Glyco_trans_28_C"/>
</dbReference>
<dbReference type="InterPro" id="IPR004276">
    <property type="entry name" value="GlycoTrans_28_N"/>
</dbReference>
<dbReference type="NCBIfam" id="TIGR01133">
    <property type="entry name" value="murG"/>
    <property type="match status" value="1"/>
</dbReference>
<dbReference type="PANTHER" id="PTHR21015:SF22">
    <property type="entry name" value="GLYCOSYLTRANSFERASE"/>
    <property type="match status" value="1"/>
</dbReference>
<dbReference type="PANTHER" id="PTHR21015">
    <property type="entry name" value="UDP-N-ACETYLGLUCOSAMINE--N-ACETYLMURAMYL-(PENTAPEPTIDE) PYROPHOSPHORYL-UNDECAPRENOL N-ACETYLGLUCOSAMINE TRANSFERASE 1"/>
    <property type="match status" value="1"/>
</dbReference>
<dbReference type="Pfam" id="PF04101">
    <property type="entry name" value="Glyco_tran_28_C"/>
    <property type="match status" value="1"/>
</dbReference>
<dbReference type="Pfam" id="PF03033">
    <property type="entry name" value="Glyco_transf_28"/>
    <property type="match status" value="1"/>
</dbReference>
<dbReference type="SUPFAM" id="SSF53756">
    <property type="entry name" value="UDP-Glycosyltransferase/glycogen phosphorylase"/>
    <property type="match status" value="1"/>
</dbReference>
<sequence>MKKINKIVLAVGGTGGHIIPALAARETFIHEDIEVLLLGKGLAHFLGDDSEVAYCDIPSGSPFSLRVNRMFSGAKQLYKGYVAALQKIRDFTPDLAIGFGSYHSLPAMLASIRSRIPLFLHEQNIVPGKVNKLFSRFAKGVGMSFAAAGEHFHCRAEEVFLPIRKLSEQIVFPGASPVICVVGGSQGAKILNDVVPKALARIRESYSNLYVHHIVGPKGDLQAVSQVYQDAGINHTVTAFDHNMLGVLQASDLVISRSGATMLNELLWVQVPAILIPYPGAYGHQEVNAKFFTHTVGGGTMILQKYLTEESLSKQVLLALDPATSENRRKAMLSAQQKKSFKSLYQFICESL</sequence>
<accession>O84766</accession>
<gene>
    <name evidence="1" type="primary">murG</name>
    <name type="ordered locus">CT_761</name>
</gene>
<keyword id="KW-0131">Cell cycle</keyword>
<keyword id="KW-0132">Cell division</keyword>
<keyword id="KW-0997">Cell inner membrane</keyword>
<keyword id="KW-1003">Cell membrane</keyword>
<keyword id="KW-0133">Cell shape</keyword>
<keyword id="KW-0961">Cell wall biogenesis/degradation</keyword>
<keyword id="KW-0328">Glycosyltransferase</keyword>
<keyword id="KW-0472">Membrane</keyword>
<keyword id="KW-0573">Peptidoglycan synthesis</keyword>
<keyword id="KW-1185">Reference proteome</keyword>
<keyword id="KW-0808">Transferase</keyword>
<name>MURG_CHLTR</name>